<name>KATG_PSESM</name>
<protein>
    <recommendedName>
        <fullName evidence="1">Catalase-peroxidase</fullName>
        <shortName evidence="1">CP</shortName>
        <ecNumber evidence="1">1.11.1.21</ecNumber>
    </recommendedName>
    <alternativeName>
        <fullName evidence="1">Peroxidase/catalase</fullName>
    </alternativeName>
</protein>
<organism>
    <name type="scientific">Pseudomonas syringae pv. tomato (strain ATCC BAA-871 / DC3000)</name>
    <dbReference type="NCBI Taxonomy" id="223283"/>
    <lineage>
        <taxon>Bacteria</taxon>
        <taxon>Pseudomonadati</taxon>
        <taxon>Pseudomonadota</taxon>
        <taxon>Gammaproteobacteria</taxon>
        <taxon>Pseudomonadales</taxon>
        <taxon>Pseudomonadaceae</taxon>
        <taxon>Pseudomonas</taxon>
    </lineage>
</organism>
<evidence type="ECO:0000255" key="1">
    <source>
        <dbReference type="HAMAP-Rule" id="MF_01961"/>
    </source>
</evidence>
<evidence type="ECO:0000256" key="2">
    <source>
        <dbReference type="SAM" id="MobiDB-lite"/>
    </source>
</evidence>
<sequence length="756" mass="82740">MSTESKCPFNHAAGGGTTNRDWWPKQLNLKILHQHSSLSDPMGEDFDYAKEFKSLDFEAVKQDLRDVMTRSQDWWPADFGHYGPLFIRMAWHSAGTYRTGDGRGGAGAGQQRFAPLNSWPDNVSLDKARRLIWPVKQKYGRKISWADLIVLTGNVALESMGFKTFGFSGGRPDVWEPEEDVYWGSETTWLGGEERYGAQKKMQQPGDGTLVAEPENHANEESRTASGERNLENPLAAVQMGLIYVNPEGPEGVPDPVASARDIRETFGRMAMNDEETVALIAGGHAFGKTHGAGPADNVGPEPEAAGLEQQGFGWSNKFGTGKGGDTITSGLEVTWTSTPTQWSNEYLENLFAFDWELTKSPAGAHQWTPKNGAGAGKIPDAHDPSKRHAPSMLTSDLALRFDPAYEQISRRFLANPEQLADAFARAWFKLTHRDMGPLARYLGPETPTEELLWQDPIPDVTHPLVDDQDVAALKGKILDSGLSVSQLVSTAWAAASTFRGSDKRGGANGGRLRLAPQKDWAVNQPAQLANVLSTLESIQSEFNAAQSNGKKVSIADLIVLAGSAGVEQAAKNAGQQVTVPFTAGRADASQEQTDVESFSFLEPIADGFRNYQKGRYKVSAESLLVDKAQLLTLTAPEMTVLLGGLRVLNINVGQSKHGVFTDKPETLTNDFFKNLLDMAVEWKATSGANDTFEARDRKTGEVKWTGSRVDLVFGSHAQLRAISEVYGSADAQERFVKDFVAVWTKVMNLDRFDLA</sequence>
<dbReference type="EC" id="1.11.1.21" evidence="1"/>
<dbReference type="EMBL" id="AE016853">
    <property type="protein sequence ID" value="AAO57978.1"/>
    <property type="molecule type" value="Genomic_DNA"/>
</dbReference>
<dbReference type="RefSeq" id="NP_794283.1">
    <property type="nucleotide sequence ID" value="NC_004578.1"/>
</dbReference>
<dbReference type="RefSeq" id="WP_011105040.1">
    <property type="nucleotide sequence ID" value="NC_004578.1"/>
</dbReference>
<dbReference type="SMR" id="Q87WL6"/>
<dbReference type="STRING" id="223283.PSPTO_4530"/>
<dbReference type="PeroxiBase" id="2313">
    <property type="entry name" value="PstCP01"/>
</dbReference>
<dbReference type="GeneID" id="1186213"/>
<dbReference type="KEGG" id="pst:PSPTO_4530"/>
<dbReference type="PATRIC" id="fig|223283.9.peg.4648"/>
<dbReference type="eggNOG" id="COG0376">
    <property type="taxonomic scope" value="Bacteria"/>
</dbReference>
<dbReference type="HOGENOM" id="CLU_025424_2_0_6"/>
<dbReference type="OrthoDB" id="9759743at2"/>
<dbReference type="PhylomeDB" id="Q87WL6"/>
<dbReference type="Proteomes" id="UP000002515">
    <property type="component" value="Chromosome"/>
</dbReference>
<dbReference type="GO" id="GO:0005829">
    <property type="term" value="C:cytosol"/>
    <property type="evidence" value="ECO:0007669"/>
    <property type="project" value="TreeGrafter"/>
</dbReference>
<dbReference type="GO" id="GO:0004096">
    <property type="term" value="F:catalase activity"/>
    <property type="evidence" value="ECO:0007669"/>
    <property type="project" value="UniProtKB-UniRule"/>
</dbReference>
<dbReference type="GO" id="GO:0020037">
    <property type="term" value="F:heme binding"/>
    <property type="evidence" value="ECO:0007669"/>
    <property type="project" value="InterPro"/>
</dbReference>
<dbReference type="GO" id="GO:0046872">
    <property type="term" value="F:metal ion binding"/>
    <property type="evidence" value="ECO:0007669"/>
    <property type="project" value="UniProtKB-KW"/>
</dbReference>
<dbReference type="GO" id="GO:0070301">
    <property type="term" value="P:cellular response to hydrogen peroxide"/>
    <property type="evidence" value="ECO:0007669"/>
    <property type="project" value="TreeGrafter"/>
</dbReference>
<dbReference type="GO" id="GO:0042744">
    <property type="term" value="P:hydrogen peroxide catabolic process"/>
    <property type="evidence" value="ECO:0007669"/>
    <property type="project" value="UniProtKB-KW"/>
</dbReference>
<dbReference type="CDD" id="cd00649">
    <property type="entry name" value="catalase_peroxidase_1"/>
    <property type="match status" value="1"/>
</dbReference>
<dbReference type="CDD" id="cd08200">
    <property type="entry name" value="catalase_peroxidase_2"/>
    <property type="match status" value="1"/>
</dbReference>
<dbReference type="FunFam" id="1.10.420.10:FF:000002">
    <property type="entry name" value="Catalase-peroxidase"/>
    <property type="match status" value="1"/>
</dbReference>
<dbReference type="FunFam" id="1.10.420.10:FF:000004">
    <property type="entry name" value="Catalase-peroxidase"/>
    <property type="match status" value="1"/>
</dbReference>
<dbReference type="FunFam" id="1.10.520.10:FF:000002">
    <property type="entry name" value="Catalase-peroxidase"/>
    <property type="match status" value="1"/>
</dbReference>
<dbReference type="FunFam" id="1.10.520.10:FF:000004">
    <property type="entry name" value="Catalase-peroxidase"/>
    <property type="match status" value="1"/>
</dbReference>
<dbReference type="Gene3D" id="1.10.520.10">
    <property type="match status" value="2"/>
</dbReference>
<dbReference type="Gene3D" id="1.10.420.10">
    <property type="entry name" value="Peroxidase, domain 2"/>
    <property type="match status" value="2"/>
</dbReference>
<dbReference type="HAMAP" id="MF_01961">
    <property type="entry name" value="Catal_peroxid"/>
    <property type="match status" value="1"/>
</dbReference>
<dbReference type="InterPro" id="IPR000763">
    <property type="entry name" value="Catalase_peroxidase"/>
</dbReference>
<dbReference type="InterPro" id="IPR002016">
    <property type="entry name" value="Haem_peroxidase"/>
</dbReference>
<dbReference type="InterPro" id="IPR010255">
    <property type="entry name" value="Haem_peroxidase_sf"/>
</dbReference>
<dbReference type="InterPro" id="IPR019794">
    <property type="entry name" value="Peroxidases_AS"/>
</dbReference>
<dbReference type="InterPro" id="IPR019793">
    <property type="entry name" value="Peroxidases_heam-ligand_BS"/>
</dbReference>
<dbReference type="NCBIfam" id="TIGR00198">
    <property type="entry name" value="cat_per_HPI"/>
    <property type="match status" value="1"/>
</dbReference>
<dbReference type="NCBIfam" id="NF011635">
    <property type="entry name" value="PRK15061.1"/>
    <property type="match status" value="1"/>
</dbReference>
<dbReference type="PANTHER" id="PTHR30555:SF0">
    <property type="entry name" value="CATALASE-PEROXIDASE"/>
    <property type="match status" value="1"/>
</dbReference>
<dbReference type="PANTHER" id="PTHR30555">
    <property type="entry name" value="HYDROPEROXIDASE I, BIFUNCTIONAL CATALASE-PEROXIDASE"/>
    <property type="match status" value="1"/>
</dbReference>
<dbReference type="Pfam" id="PF00141">
    <property type="entry name" value="peroxidase"/>
    <property type="match status" value="2"/>
</dbReference>
<dbReference type="PRINTS" id="PR00460">
    <property type="entry name" value="BPEROXIDASE"/>
</dbReference>
<dbReference type="PRINTS" id="PR00458">
    <property type="entry name" value="PEROXIDASE"/>
</dbReference>
<dbReference type="SUPFAM" id="SSF48113">
    <property type="entry name" value="Heme-dependent peroxidases"/>
    <property type="match status" value="2"/>
</dbReference>
<dbReference type="PROSITE" id="PS00435">
    <property type="entry name" value="PEROXIDASE_1"/>
    <property type="match status" value="1"/>
</dbReference>
<dbReference type="PROSITE" id="PS00436">
    <property type="entry name" value="PEROXIDASE_2"/>
    <property type="match status" value="1"/>
</dbReference>
<dbReference type="PROSITE" id="PS50873">
    <property type="entry name" value="PEROXIDASE_4"/>
    <property type="match status" value="1"/>
</dbReference>
<accession>Q87WL6</accession>
<comment type="function">
    <text evidence="1">Bifunctional enzyme with both catalase and broad-spectrum peroxidase activity.</text>
</comment>
<comment type="catalytic activity">
    <reaction evidence="1">
        <text>H2O2 + AH2 = A + 2 H2O</text>
        <dbReference type="Rhea" id="RHEA:30275"/>
        <dbReference type="ChEBI" id="CHEBI:13193"/>
        <dbReference type="ChEBI" id="CHEBI:15377"/>
        <dbReference type="ChEBI" id="CHEBI:16240"/>
        <dbReference type="ChEBI" id="CHEBI:17499"/>
        <dbReference type="EC" id="1.11.1.21"/>
    </reaction>
</comment>
<comment type="catalytic activity">
    <reaction evidence="1">
        <text>2 H2O2 = O2 + 2 H2O</text>
        <dbReference type="Rhea" id="RHEA:20309"/>
        <dbReference type="ChEBI" id="CHEBI:15377"/>
        <dbReference type="ChEBI" id="CHEBI:15379"/>
        <dbReference type="ChEBI" id="CHEBI:16240"/>
        <dbReference type="EC" id="1.11.1.21"/>
    </reaction>
</comment>
<comment type="cofactor">
    <cofactor evidence="1">
        <name>heme b</name>
        <dbReference type="ChEBI" id="CHEBI:60344"/>
    </cofactor>
    <text evidence="1">Binds 1 heme b (iron(II)-protoporphyrin IX) group per dimer.</text>
</comment>
<comment type="subunit">
    <text evidence="1">Homodimer or homotetramer.</text>
</comment>
<comment type="PTM">
    <text evidence="1">Formation of the three residue Trp-Tyr-Met cross-link is important for the catalase, but not the peroxidase activity of the enzyme.</text>
</comment>
<comment type="similarity">
    <text evidence="1">Belongs to the peroxidase family. Peroxidase/catalase subfamily.</text>
</comment>
<reference key="1">
    <citation type="journal article" date="2003" name="Proc. Natl. Acad. Sci. U.S.A.">
        <title>The complete genome sequence of the Arabidopsis and tomato pathogen Pseudomonas syringae pv. tomato DC3000.</title>
        <authorList>
            <person name="Buell C.R."/>
            <person name="Joardar V."/>
            <person name="Lindeberg M."/>
            <person name="Selengut J."/>
            <person name="Paulsen I.T."/>
            <person name="Gwinn M.L."/>
            <person name="Dodson R.J."/>
            <person name="DeBoy R.T."/>
            <person name="Durkin A.S."/>
            <person name="Kolonay J.F."/>
            <person name="Madupu R."/>
            <person name="Daugherty S.C."/>
            <person name="Brinkac L.M."/>
            <person name="Beanan M.J."/>
            <person name="Haft D.H."/>
            <person name="Nelson W.C."/>
            <person name="Davidsen T.M."/>
            <person name="Zafar N."/>
            <person name="Zhou L."/>
            <person name="Liu J."/>
            <person name="Yuan Q."/>
            <person name="Khouri H.M."/>
            <person name="Fedorova N.B."/>
            <person name="Tran B."/>
            <person name="Russell D."/>
            <person name="Berry K.J."/>
            <person name="Utterback T.R."/>
            <person name="Van Aken S.E."/>
            <person name="Feldblyum T.V."/>
            <person name="D'Ascenzo M."/>
            <person name="Deng W.-L."/>
            <person name="Ramos A.R."/>
            <person name="Alfano J.R."/>
            <person name="Cartinhour S."/>
            <person name="Chatterjee A.K."/>
            <person name="Delaney T.P."/>
            <person name="Lazarowitz S.G."/>
            <person name="Martin G.B."/>
            <person name="Schneider D.J."/>
            <person name="Tang X."/>
            <person name="Bender C.L."/>
            <person name="White O."/>
            <person name="Fraser C.M."/>
            <person name="Collmer A."/>
        </authorList>
    </citation>
    <scope>NUCLEOTIDE SEQUENCE [LARGE SCALE GENOMIC DNA]</scope>
    <source>
        <strain>ATCC BAA-871 / DC3000</strain>
    </source>
</reference>
<feature type="chain" id="PRO_0000354873" description="Catalase-peroxidase">
    <location>
        <begin position="1"/>
        <end position="756"/>
    </location>
</feature>
<feature type="region of interest" description="Disordered" evidence="2">
    <location>
        <begin position="198"/>
        <end position="230"/>
    </location>
</feature>
<feature type="region of interest" description="Disordered" evidence="2">
    <location>
        <begin position="371"/>
        <end position="390"/>
    </location>
</feature>
<feature type="compositionally biased region" description="Basic and acidic residues" evidence="2">
    <location>
        <begin position="214"/>
        <end position="223"/>
    </location>
</feature>
<feature type="active site" description="Proton acceptor" evidence="1">
    <location>
        <position position="92"/>
    </location>
</feature>
<feature type="binding site" description="axial binding residue" evidence="1">
    <location>
        <position position="285"/>
    </location>
    <ligand>
        <name>heme b</name>
        <dbReference type="ChEBI" id="CHEBI:60344"/>
    </ligand>
    <ligandPart>
        <name>Fe</name>
        <dbReference type="ChEBI" id="CHEBI:18248"/>
    </ligandPart>
</feature>
<feature type="site" description="Transition state stabilizer" evidence="1">
    <location>
        <position position="88"/>
    </location>
</feature>
<feature type="cross-link" description="Tryptophyl-tyrosyl-methioninium (Trp-Tyr) (with M-270)" evidence="1">
    <location>
        <begin position="91"/>
        <end position="244"/>
    </location>
</feature>
<feature type="cross-link" description="Tryptophyl-tyrosyl-methioninium (Tyr-Met) (with W-91)" evidence="1">
    <location>
        <begin position="244"/>
        <end position="270"/>
    </location>
</feature>
<proteinExistence type="inferred from homology"/>
<keyword id="KW-0349">Heme</keyword>
<keyword id="KW-0376">Hydrogen peroxide</keyword>
<keyword id="KW-0408">Iron</keyword>
<keyword id="KW-0479">Metal-binding</keyword>
<keyword id="KW-0560">Oxidoreductase</keyword>
<keyword id="KW-0575">Peroxidase</keyword>
<keyword id="KW-1185">Reference proteome</keyword>
<gene>
    <name evidence="1" type="primary">katG</name>
    <name type="ordered locus">PSPTO_4530</name>
</gene>